<organismHost>
    <name type="scientific">Equus caballus</name>
    <name type="common">Horse</name>
    <dbReference type="NCBI Taxonomy" id="9796"/>
</organismHost>
<comment type="similarity">
    <text evidence="2">Belongs to the herpesviridae UL69 family.</text>
</comment>
<protein>
    <recommendedName>
        <fullName>Immediate-early phosphoprotein 57</fullName>
    </recommendedName>
</protein>
<evidence type="ECO:0000256" key="1">
    <source>
        <dbReference type="SAM" id="MobiDB-lite"/>
    </source>
</evidence>
<evidence type="ECO:0000305" key="2"/>
<organism>
    <name type="scientific">Equine herpesvirus 2 (strain 86/87)</name>
    <name type="common">EHV-2</name>
    <dbReference type="NCBI Taxonomy" id="82831"/>
    <lineage>
        <taxon>Viruses</taxon>
        <taxon>Duplodnaviria</taxon>
        <taxon>Heunggongvirae</taxon>
        <taxon>Peploviricota</taxon>
        <taxon>Herviviricetes</taxon>
        <taxon>Herpesvirales</taxon>
        <taxon>Orthoherpesviridae</taxon>
        <taxon>Gammaherpesvirinae</taxon>
        <taxon>Percavirus</taxon>
        <taxon>Percavirus equidgamma2</taxon>
        <taxon>Equid gammaherpesvirus 2</taxon>
    </lineage>
</organism>
<reference key="1">
    <citation type="journal article" date="1995" name="J. Mol. Biol.">
        <title>The DNA sequence of equine herpesvirus 2.</title>
        <authorList>
            <person name="Telford E.A.R."/>
            <person name="Watson M.S."/>
            <person name="Aird H.C."/>
            <person name="Perry J."/>
            <person name="Davison A.J."/>
        </authorList>
    </citation>
    <scope>NUCLEOTIDE SEQUENCE [LARGE SCALE GENOMIC DNA]</scope>
</reference>
<reference key="2">
    <citation type="submission" date="2015-01" db="EMBL/GenBank/DDBJ databases">
        <authorList>
            <person name="Davison A.J."/>
        </authorList>
    </citation>
    <scope>SEQUENCE REVISION</scope>
</reference>
<keyword id="KW-0244">Early protein</keyword>
<keyword id="KW-0597">Phosphoprotein</keyword>
<keyword id="KW-1185">Reference proteome</keyword>
<keyword id="KW-0804">Transcription</keyword>
<keyword id="KW-0805">Transcription regulation</keyword>
<name>IE63_EHV2</name>
<proteinExistence type="inferred from homology"/>
<gene>
    <name type="primary">57</name>
</gene>
<dbReference type="EMBL" id="U20824">
    <property type="protein sequence ID" value="AAC13845.2"/>
    <property type="molecule type" value="Genomic_DNA"/>
</dbReference>
<dbReference type="PIR" id="S55652">
    <property type="entry name" value="S55652"/>
</dbReference>
<dbReference type="SMR" id="Q66659"/>
<dbReference type="KEGG" id="vg:1461037"/>
<dbReference type="Proteomes" id="UP000007083">
    <property type="component" value="Segment"/>
</dbReference>
<dbReference type="GO" id="GO:0006355">
    <property type="term" value="P:regulation of DNA-templated transcription"/>
    <property type="evidence" value="ECO:0007669"/>
    <property type="project" value="InterPro"/>
</dbReference>
<dbReference type="InterPro" id="IPR008648">
    <property type="entry name" value="ICP27-like"/>
</dbReference>
<dbReference type="Pfam" id="PF05459">
    <property type="entry name" value="Herpes_UL69"/>
    <property type="match status" value="1"/>
</dbReference>
<sequence length="643" mass="71028">MAQKMLEDQDMLDQLLSGVHDSDLDFSESEEEEEEEESSSESESDEDSDMEVEPARQEAGPPEQCQQQPQQRAREQQPPPQQQQPQQREQGPPQQQQQQRTPKRGEESGDARPRARAPSGDAGPGPSGQARLPQQQQPQQPQQPPPKPPRQEVTVRAPGDRQQPQSQAAQPIPVIGGGCAPFQLRAPIAAAAATGWGGEQAPAQPLFQHVSPLNRRGDEDRRSGRDRRRREGRERDRESRSKGRNWYRPYPRGSSGARREGGGRDAGQGQGTRNPGPSQGGCEAGPSQAQAAQAARAPRQEQGERRQMLPQGQNLGPRPQQCPPQQCPPQPCPPFPLEALPILRAKFEPSCAVSYTNLVKSIQKIAMPPFLMRRREASPPCHFSKIPQATPGLVIPAAARTGEAKFEKFTDAFVQKVIDRGMSPQDCINKTVSLRKLDAKFDPLKTFTAKTVNFGQWLDVRKDSIINSGMSTQVVFLEELCAWAKLNLQHGCNLEERDLILHTAETVCSQLMYKLKPIMSCLEPNKPYASMAKQMAYLVCGAGRIQDAGMLLREVKVGSPLTMLVAFSLCVPVMITCRNRNPSLFNYCKSFLDMYQPGLLCALFNTMTSKLNTTCTEEECYASVRAAIGSVVNTRGLLFVPGI</sequence>
<feature type="chain" id="PRO_0000406032" description="Immediate-early phosphoprotein 57">
    <location>
        <begin position="1"/>
        <end position="643"/>
    </location>
</feature>
<feature type="region of interest" description="Disordered" evidence="1">
    <location>
        <begin position="1"/>
        <end position="180"/>
    </location>
</feature>
<feature type="region of interest" description="Disordered" evidence="1">
    <location>
        <begin position="194"/>
        <end position="329"/>
    </location>
</feature>
<feature type="compositionally biased region" description="Acidic residues" evidence="1">
    <location>
        <begin position="24"/>
        <end position="52"/>
    </location>
</feature>
<feature type="compositionally biased region" description="Low complexity" evidence="1">
    <location>
        <begin position="57"/>
        <end position="71"/>
    </location>
</feature>
<feature type="compositionally biased region" description="Low complexity" evidence="1">
    <location>
        <begin position="83"/>
        <end position="100"/>
    </location>
</feature>
<feature type="compositionally biased region" description="Basic and acidic residues" evidence="1">
    <location>
        <begin position="103"/>
        <end position="113"/>
    </location>
</feature>
<feature type="compositionally biased region" description="Low complexity" evidence="1">
    <location>
        <begin position="162"/>
        <end position="171"/>
    </location>
</feature>
<feature type="compositionally biased region" description="Basic and acidic residues" evidence="1">
    <location>
        <begin position="215"/>
        <end position="241"/>
    </location>
</feature>
<feature type="compositionally biased region" description="Low complexity" evidence="1">
    <location>
        <begin position="284"/>
        <end position="297"/>
    </location>
</feature>
<feature type="compositionally biased region" description="Basic and acidic residues" evidence="1">
    <location>
        <begin position="298"/>
        <end position="307"/>
    </location>
</feature>
<feature type="compositionally biased region" description="Pro residues" evidence="1">
    <location>
        <begin position="320"/>
        <end position="329"/>
    </location>
</feature>
<accession>Q66659</accession>